<name>TRMD_RHIJ3</name>
<organism>
    <name type="scientific">Rhizobium johnstonii (strain DSM 114642 / LMG 32736 / 3841)</name>
    <name type="common">Rhizobium leguminosarum bv. viciae</name>
    <dbReference type="NCBI Taxonomy" id="216596"/>
    <lineage>
        <taxon>Bacteria</taxon>
        <taxon>Pseudomonadati</taxon>
        <taxon>Pseudomonadota</taxon>
        <taxon>Alphaproteobacteria</taxon>
        <taxon>Hyphomicrobiales</taxon>
        <taxon>Rhizobiaceae</taxon>
        <taxon>Rhizobium/Agrobacterium group</taxon>
        <taxon>Rhizobium</taxon>
        <taxon>Rhizobium johnstonii</taxon>
    </lineage>
</organism>
<accession>Q1MAK3</accession>
<dbReference type="EC" id="2.1.1.228" evidence="1"/>
<dbReference type="EMBL" id="AM236080">
    <property type="protein sequence ID" value="CAK10035.1"/>
    <property type="molecule type" value="Genomic_DNA"/>
</dbReference>
<dbReference type="SMR" id="Q1MAK3"/>
<dbReference type="EnsemblBacteria" id="CAK10035">
    <property type="protein sequence ID" value="CAK10035"/>
    <property type="gene ID" value="RL4551"/>
</dbReference>
<dbReference type="KEGG" id="rle:RL4551"/>
<dbReference type="eggNOG" id="COG0336">
    <property type="taxonomic scope" value="Bacteria"/>
</dbReference>
<dbReference type="HOGENOM" id="CLU_047363_0_1_5"/>
<dbReference type="Proteomes" id="UP000006575">
    <property type="component" value="Chromosome"/>
</dbReference>
<dbReference type="GO" id="GO:0005829">
    <property type="term" value="C:cytosol"/>
    <property type="evidence" value="ECO:0007669"/>
    <property type="project" value="TreeGrafter"/>
</dbReference>
<dbReference type="GO" id="GO:0052906">
    <property type="term" value="F:tRNA (guanine(37)-N1)-methyltransferase activity"/>
    <property type="evidence" value="ECO:0007669"/>
    <property type="project" value="UniProtKB-UniRule"/>
</dbReference>
<dbReference type="GO" id="GO:0002939">
    <property type="term" value="P:tRNA N1-guanine methylation"/>
    <property type="evidence" value="ECO:0007669"/>
    <property type="project" value="TreeGrafter"/>
</dbReference>
<dbReference type="CDD" id="cd18080">
    <property type="entry name" value="TrmD-like"/>
    <property type="match status" value="1"/>
</dbReference>
<dbReference type="FunFam" id="3.40.1280.10:FF:000001">
    <property type="entry name" value="tRNA (guanine-N(1)-)-methyltransferase"/>
    <property type="match status" value="1"/>
</dbReference>
<dbReference type="Gene3D" id="3.40.1280.10">
    <property type="match status" value="1"/>
</dbReference>
<dbReference type="Gene3D" id="1.10.1270.20">
    <property type="entry name" value="tRNA(m1g37)methyltransferase, domain 2"/>
    <property type="match status" value="1"/>
</dbReference>
<dbReference type="HAMAP" id="MF_00605">
    <property type="entry name" value="TrmD"/>
    <property type="match status" value="1"/>
</dbReference>
<dbReference type="InterPro" id="IPR029028">
    <property type="entry name" value="Alpha/beta_knot_MTases"/>
</dbReference>
<dbReference type="InterPro" id="IPR023148">
    <property type="entry name" value="tRNA_m1G_MeTrfase_C_sf"/>
</dbReference>
<dbReference type="InterPro" id="IPR002649">
    <property type="entry name" value="tRNA_m1G_MeTrfase_TrmD"/>
</dbReference>
<dbReference type="InterPro" id="IPR029026">
    <property type="entry name" value="tRNA_m1G_MTases_N"/>
</dbReference>
<dbReference type="InterPro" id="IPR016009">
    <property type="entry name" value="tRNA_MeTrfase_TRMD/TRM10"/>
</dbReference>
<dbReference type="NCBIfam" id="NF000648">
    <property type="entry name" value="PRK00026.1"/>
    <property type="match status" value="1"/>
</dbReference>
<dbReference type="NCBIfam" id="TIGR00088">
    <property type="entry name" value="trmD"/>
    <property type="match status" value="1"/>
</dbReference>
<dbReference type="PANTHER" id="PTHR46417">
    <property type="entry name" value="TRNA (GUANINE-N(1)-)-METHYLTRANSFERASE"/>
    <property type="match status" value="1"/>
</dbReference>
<dbReference type="PANTHER" id="PTHR46417:SF1">
    <property type="entry name" value="TRNA (GUANINE-N(1)-)-METHYLTRANSFERASE"/>
    <property type="match status" value="1"/>
</dbReference>
<dbReference type="Pfam" id="PF01746">
    <property type="entry name" value="tRNA_m1G_MT"/>
    <property type="match status" value="1"/>
</dbReference>
<dbReference type="PIRSF" id="PIRSF000386">
    <property type="entry name" value="tRNA_mtase"/>
    <property type="match status" value="1"/>
</dbReference>
<dbReference type="SUPFAM" id="SSF75217">
    <property type="entry name" value="alpha/beta knot"/>
    <property type="match status" value="1"/>
</dbReference>
<protein>
    <recommendedName>
        <fullName evidence="1">tRNA (guanine-N(1)-)-methyltransferase</fullName>
        <ecNumber evidence="1">2.1.1.228</ecNumber>
    </recommendedName>
    <alternativeName>
        <fullName evidence="1">M1G-methyltransferase</fullName>
    </alternativeName>
    <alternativeName>
        <fullName evidence="1">tRNA [GM37] methyltransferase</fullName>
    </alternativeName>
</protein>
<gene>
    <name evidence="1" type="primary">trmD</name>
    <name type="ordered locus">RL4551</name>
</gene>
<sequence>MMAFRASVLTLYPEMFPGHLGFSLAGKAMERGQWSLDTVQIRDFATDRHRTVDDTPAGGGAGMVLKADVLARAIDSASETDTRPRLLMSPRGRPLTQERVRELAAGDGVIIVCGRFEGVDQRVIEARGLEEVSIGDYVLSGGEPAALTVLDAIVRILPGVMGNDLSGLHESFEGGLLEHPHYTRPQEWEGREIPAILTSGNHGAIEKWRHQEAVRLTRERRPDLLEKAGASPGKSGSNFGKHDA</sequence>
<keyword id="KW-0963">Cytoplasm</keyword>
<keyword id="KW-0489">Methyltransferase</keyword>
<keyword id="KW-0949">S-adenosyl-L-methionine</keyword>
<keyword id="KW-0808">Transferase</keyword>
<keyword id="KW-0819">tRNA processing</keyword>
<reference key="1">
    <citation type="journal article" date="2006" name="Genome Biol.">
        <title>The genome of Rhizobium leguminosarum has recognizable core and accessory components.</title>
        <authorList>
            <person name="Young J.P.W."/>
            <person name="Crossman L.C."/>
            <person name="Johnston A.W.B."/>
            <person name="Thomson N.R."/>
            <person name="Ghazoui Z.F."/>
            <person name="Hull K.H."/>
            <person name="Wexler M."/>
            <person name="Curson A.R.J."/>
            <person name="Todd J.D."/>
            <person name="Poole P.S."/>
            <person name="Mauchline T.H."/>
            <person name="East A.K."/>
            <person name="Quail M.A."/>
            <person name="Churcher C."/>
            <person name="Arrowsmith C."/>
            <person name="Cherevach I."/>
            <person name="Chillingworth T."/>
            <person name="Clarke K."/>
            <person name="Cronin A."/>
            <person name="Davis P."/>
            <person name="Fraser A."/>
            <person name="Hance Z."/>
            <person name="Hauser H."/>
            <person name="Jagels K."/>
            <person name="Moule S."/>
            <person name="Mungall K."/>
            <person name="Norbertczak H."/>
            <person name="Rabbinowitsch E."/>
            <person name="Sanders M."/>
            <person name="Simmonds M."/>
            <person name="Whitehead S."/>
            <person name="Parkhill J."/>
        </authorList>
    </citation>
    <scope>NUCLEOTIDE SEQUENCE [LARGE SCALE GENOMIC DNA]</scope>
    <source>
        <strain>DSM 114642 / LMG 32736 / 3841</strain>
    </source>
</reference>
<comment type="function">
    <text evidence="1">Specifically methylates guanosine-37 in various tRNAs.</text>
</comment>
<comment type="catalytic activity">
    <reaction evidence="1">
        <text>guanosine(37) in tRNA + S-adenosyl-L-methionine = N(1)-methylguanosine(37) in tRNA + S-adenosyl-L-homocysteine + H(+)</text>
        <dbReference type="Rhea" id="RHEA:36899"/>
        <dbReference type="Rhea" id="RHEA-COMP:10145"/>
        <dbReference type="Rhea" id="RHEA-COMP:10147"/>
        <dbReference type="ChEBI" id="CHEBI:15378"/>
        <dbReference type="ChEBI" id="CHEBI:57856"/>
        <dbReference type="ChEBI" id="CHEBI:59789"/>
        <dbReference type="ChEBI" id="CHEBI:73542"/>
        <dbReference type="ChEBI" id="CHEBI:74269"/>
        <dbReference type="EC" id="2.1.1.228"/>
    </reaction>
</comment>
<comment type="subunit">
    <text evidence="1">Homodimer.</text>
</comment>
<comment type="subcellular location">
    <subcellularLocation>
        <location evidence="1">Cytoplasm</location>
    </subcellularLocation>
</comment>
<comment type="similarity">
    <text evidence="1">Belongs to the RNA methyltransferase TrmD family.</text>
</comment>
<proteinExistence type="inferred from homology"/>
<feature type="chain" id="PRO_0000257456" description="tRNA (guanine-N(1)-)-methyltransferase">
    <location>
        <begin position="1"/>
        <end position="244"/>
    </location>
</feature>
<feature type="region of interest" description="Disordered" evidence="2">
    <location>
        <begin position="220"/>
        <end position="244"/>
    </location>
</feature>
<feature type="binding site" evidence="1">
    <location>
        <position position="114"/>
    </location>
    <ligand>
        <name>S-adenosyl-L-methionine</name>
        <dbReference type="ChEBI" id="CHEBI:59789"/>
    </ligand>
</feature>
<feature type="binding site" evidence="1">
    <location>
        <begin position="134"/>
        <end position="139"/>
    </location>
    <ligand>
        <name>S-adenosyl-L-methionine</name>
        <dbReference type="ChEBI" id="CHEBI:59789"/>
    </ligand>
</feature>
<evidence type="ECO:0000255" key="1">
    <source>
        <dbReference type="HAMAP-Rule" id="MF_00605"/>
    </source>
</evidence>
<evidence type="ECO:0000256" key="2">
    <source>
        <dbReference type="SAM" id="MobiDB-lite"/>
    </source>
</evidence>